<organism>
    <name type="scientific">Eremothecium gossypii (strain ATCC 10895 / CBS 109.51 / FGSC 9923 / NRRL Y-1056)</name>
    <name type="common">Yeast</name>
    <name type="synonym">Ashbya gossypii</name>
    <dbReference type="NCBI Taxonomy" id="284811"/>
    <lineage>
        <taxon>Eukaryota</taxon>
        <taxon>Fungi</taxon>
        <taxon>Dikarya</taxon>
        <taxon>Ascomycota</taxon>
        <taxon>Saccharomycotina</taxon>
        <taxon>Saccharomycetes</taxon>
        <taxon>Saccharomycetales</taxon>
        <taxon>Saccharomycetaceae</taxon>
        <taxon>Eremothecium</taxon>
    </lineage>
</organism>
<accession>Q754R6</accession>
<feature type="chain" id="PRO_0000388574" description="Golgi to ER traffic protein 1">
    <location>
        <begin position="1"/>
        <end position="205"/>
    </location>
</feature>
<feature type="topological domain" description="Lumenal" evidence="1">
    <location>
        <begin position="1"/>
        <end position="3"/>
    </location>
</feature>
<feature type="transmembrane region" description="Helical" evidence="1">
    <location>
        <begin position="4"/>
        <end position="24"/>
    </location>
</feature>
<feature type="topological domain" description="Cytoplasmic" evidence="1">
    <location>
        <begin position="25"/>
        <end position="96"/>
    </location>
</feature>
<feature type="transmembrane region" description="Helical" evidence="1">
    <location>
        <begin position="97"/>
        <end position="117"/>
    </location>
</feature>
<feature type="topological domain" description="Lumenal" evidence="1">
    <location>
        <begin position="118"/>
        <end position="156"/>
    </location>
</feature>
<feature type="transmembrane region" description="Helical" evidence="1">
    <location>
        <begin position="157"/>
        <end position="173"/>
    </location>
</feature>
<feature type="topological domain" description="Cytoplasmic" evidence="1">
    <location>
        <begin position="174"/>
        <end position="205"/>
    </location>
</feature>
<feature type="coiled-coil region" evidence="1">
    <location>
        <begin position="32"/>
        <end position="96"/>
    </location>
</feature>
<keyword id="KW-0175">Coiled coil</keyword>
<keyword id="KW-0256">Endoplasmic reticulum</keyword>
<keyword id="KW-0931">ER-Golgi transport</keyword>
<keyword id="KW-0333">Golgi apparatus</keyword>
<keyword id="KW-0472">Membrane</keyword>
<keyword id="KW-1185">Reference proteome</keyword>
<keyword id="KW-0812">Transmembrane</keyword>
<keyword id="KW-1133">Transmembrane helix</keyword>
<keyword id="KW-0813">Transport</keyword>
<reference key="1">
    <citation type="journal article" date="2004" name="Science">
        <title>The Ashbya gossypii genome as a tool for mapping the ancient Saccharomyces cerevisiae genome.</title>
        <authorList>
            <person name="Dietrich F.S."/>
            <person name="Voegeli S."/>
            <person name="Brachat S."/>
            <person name="Lerch A."/>
            <person name="Gates K."/>
            <person name="Steiner S."/>
            <person name="Mohr C."/>
            <person name="Poehlmann R."/>
            <person name="Luedi P."/>
            <person name="Choi S."/>
            <person name="Wing R.A."/>
            <person name="Flavier A."/>
            <person name="Gaffney T.D."/>
            <person name="Philippsen P."/>
        </authorList>
    </citation>
    <scope>NUCLEOTIDE SEQUENCE [LARGE SCALE GENOMIC DNA]</scope>
    <source>
        <strain>ATCC 10895 / CBS 109.51 / FGSC 9923 / NRRL Y-1056</strain>
    </source>
</reference>
<reference key="2">
    <citation type="journal article" date="2013" name="G3 (Bethesda)">
        <title>Genomes of Ashbya fungi isolated from insects reveal four mating-type loci, numerous translocations, lack of transposons, and distinct gene duplications.</title>
        <authorList>
            <person name="Dietrich F.S."/>
            <person name="Voegeli S."/>
            <person name="Kuo S."/>
            <person name="Philippsen P."/>
        </authorList>
    </citation>
    <scope>GENOME REANNOTATION</scope>
    <source>
        <strain>ATCC 10895 / CBS 109.51 / FGSC 9923 / NRRL Y-1056</strain>
    </source>
</reference>
<name>GET1_EREGS</name>
<gene>
    <name evidence="1" type="primary">GET1</name>
    <name type="ordered locus">AFR006C</name>
</gene>
<comment type="function">
    <text evidence="1">Required for the post-translational delivery of tail-anchored (TA) proteins to the endoplasmic reticulum. Together with GET2, acts as a membrane receptor for soluble GET3, which recognizes and selectively binds the transmembrane domain of TA proteins in the cytosol. The GET complex cooperates with the HDEL receptor ERD2 to mediate the ATP-dependent retrieval of resident ER proteins that contain a C-terminal H-D-E-L retention signal from the Golgi to the ER.</text>
</comment>
<comment type="subunit">
    <text evidence="1">Component of the Golgi to ER traffic (GET) complex, which is composed of GET1, GET2 and GET3. Within the complex, GET1 and GET2 form a heterotetramer which is stabilized by phosphatidylinositol binding and which binds to the GET3 homodimer.</text>
</comment>
<comment type="subcellular location">
    <subcellularLocation>
        <location evidence="1">Endoplasmic reticulum membrane</location>
        <topology evidence="1">Multi-pass membrane protein</topology>
    </subcellularLocation>
    <subcellularLocation>
        <location evidence="1">Golgi apparatus membrane</location>
        <topology evidence="1">Multi-pass membrane protein</topology>
    </subcellularLocation>
</comment>
<comment type="similarity">
    <text evidence="1">Belongs to the WRB/GET1 family.</text>
</comment>
<sequence>MDYWILLVLAFLVADKSWHLTGLLATKLTSPERLQQLIRERQELHQQQQSLSAQDHYAKWTKNNRRLDVLDRDIARVRKNYLESVEATKARLAKLKLLVVTVPFTALKFYKGKLPVYALPKGMFPRFIEGTLEHGWLYMALAPLNMKQFSEGASVAVSLGIWLFALLRVLGAIEFVLETLREQNPQVATETAKVHARTAQAASAN</sequence>
<dbReference type="EMBL" id="AE016819">
    <property type="protein sequence ID" value="AAS53377.1"/>
    <property type="molecule type" value="Genomic_DNA"/>
</dbReference>
<dbReference type="RefSeq" id="NP_985553.1">
    <property type="nucleotide sequence ID" value="NM_210907.1"/>
</dbReference>
<dbReference type="SMR" id="Q754R6"/>
<dbReference type="FunCoup" id="Q754R6">
    <property type="interactions" value="45"/>
</dbReference>
<dbReference type="STRING" id="284811.Q754R6"/>
<dbReference type="GeneID" id="4621792"/>
<dbReference type="KEGG" id="ago:AGOS_AFR006C"/>
<dbReference type="eggNOG" id="KOG4253">
    <property type="taxonomic scope" value="Eukaryota"/>
</dbReference>
<dbReference type="InParanoid" id="Q754R6"/>
<dbReference type="OrthoDB" id="69461at2759"/>
<dbReference type="Proteomes" id="UP000000591">
    <property type="component" value="Chromosome VI"/>
</dbReference>
<dbReference type="GO" id="GO:0005789">
    <property type="term" value="C:endoplasmic reticulum membrane"/>
    <property type="evidence" value="ECO:0007669"/>
    <property type="project" value="UniProtKB-SubCell"/>
</dbReference>
<dbReference type="GO" id="GO:0043529">
    <property type="term" value="C:GET complex"/>
    <property type="evidence" value="ECO:0007669"/>
    <property type="project" value="UniProtKB-UniRule"/>
</dbReference>
<dbReference type="GO" id="GO:0000139">
    <property type="term" value="C:Golgi membrane"/>
    <property type="evidence" value="ECO:0007669"/>
    <property type="project" value="UniProtKB-SubCell"/>
</dbReference>
<dbReference type="GO" id="GO:0071816">
    <property type="term" value="P:tail-anchored membrane protein insertion into ER membrane"/>
    <property type="evidence" value="ECO:0007669"/>
    <property type="project" value="InterPro"/>
</dbReference>
<dbReference type="GO" id="GO:0016192">
    <property type="term" value="P:vesicle-mediated transport"/>
    <property type="evidence" value="ECO:0007669"/>
    <property type="project" value="UniProtKB-KW"/>
</dbReference>
<dbReference type="Gene3D" id="1.10.287.660">
    <property type="entry name" value="Helix hairpin bin"/>
    <property type="match status" value="1"/>
</dbReference>
<dbReference type="HAMAP" id="MF_03113">
    <property type="entry name" value="Get1"/>
    <property type="match status" value="1"/>
</dbReference>
<dbReference type="InterPro" id="IPR028945">
    <property type="entry name" value="Get1"/>
</dbReference>
<dbReference type="InterPro" id="IPR027538">
    <property type="entry name" value="Get1_fungi"/>
</dbReference>
<dbReference type="InterPro" id="IPR029012">
    <property type="entry name" value="Helix_hairpin_bin_sf"/>
</dbReference>
<dbReference type="PANTHER" id="PTHR42650:SF1">
    <property type="entry name" value="GUIDED ENTRY OF TAIL-ANCHORED PROTEINS FACTOR 1"/>
    <property type="match status" value="1"/>
</dbReference>
<dbReference type="PANTHER" id="PTHR42650">
    <property type="entry name" value="TAIL-ANCHORED PROTEIN INSERTION RECEPTOR WRB"/>
    <property type="match status" value="1"/>
</dbReference>
<dbReference type="Pfam" id="PF04420">
    <property type="entry name" value="CHD5"/>
    <property type="match status" value="1"/>
</dbReference>
<protein>
    <recommendedName>
        <fullName evidence="1">Golgi to ER traffic protein 1</fullName>
    </recommendedName>
    <alternativeName>
        <fullName evidence="1">Guided entry of tail-anchored proteins 1</fullName>
    </alternativeName>
</protein>
<proteinExistence type="inferred from homology"/>
<evidence type="ECO:0000255" key="1">
    <source>
        <dbReference type="HAMAP-Rule" id="MF_03113"/>
    </source>
</evidence>